<organism>
    <name type="scientific">Streptococcus mutans serotype c (strain ATCC 700610 / UA159)</name>
    <dbReference type="NCBI Taxonomy" id="210007"/>
    <lineage>
        <taxon>Bacteria</taxon>
        <taxon>Bacillati</taxon>
        <taxon>Bacillota</taxon>
        <taxon>Bacilli</taxon>
        <taxon>Lactobacillales</taxon>
        <taxon>Streptococcaceae</taxon>
        <taxon>Streptococcus</taxon>
    </lineage>
</organism>
<sequence length="110" mass="13252">MEIEKTNRMNALFEFYAALLTDKQMNYIELYYADDYSLAEIAEEFDVSRQAVYDNIKRTEKILEDYEMKLHMYSDYVVRSEIFDAIMKKYPNDPYLQNKISILTTIDNRD</sequence>
<comment type="function">
    <text>Might take part in the signal recognition particle (SRP) pathway. This is inferred from the conservation of its genetic proximity to ftsY/ffh. May be a regulatory protein.</text>
</comment>
<comment type="similarity">
    <text evidence="1">Belongs to the UPF0122 family.</text>
</comment>
<evidence type="ECO:0000305" key="1"/>
<name>Y1061_STRMU</name>
<dbReference type="EMBL" id="U48884">
    <property type="protein sequence ID" value="AAC44501.1"/>
    <property type="molecule type" value="Genomic_DNA"/>
</dbReference>
<dbReference type="EMBL" id="U88582">
    <property type="protein sequence ID" value="AAB48049.1"/>
    <property type="molecule type" value="Genomic_DNA"/>
</dbReference>
<dbReference type="EMBL" id="AE014133">
    <property type="protein sequence ID" value="AAN58759.1"/>
    <property type="molecule type" value="Genomic_DNA"/>
</dbReference>
<dbReference type="RefSeq" id="NP_721453.1">
    <property type="nucleotide sequence ID" value="NC_004350.2"/>
</dbReference>
<dbReference type="RefSeq" id="WP_002262279.1">
    <property type="nucleotide sequence ID" value="NC_004350.2"/>
</dbReference>
<dbReference type="SMR" id="P96468"/>
<dbReference type="STRING" id="210007.SMU_1061"/>
<dbReference type="KEGG" id="smu:SMU_1061"/>
<dbReference type="PATRIC" id="fig|210007.7.peg.948"/>
<dbReference type="eggNOG" id="COG2739">
    <property type="taxonomic scope" value="Bacteria"/>
</dbReference>
<dbReference type="HOGENOM" id="CLU_129218_1_0_9"/>
<dbReference type="OrthoDB" id="6392at2"/>
<dbReference type="PhylomeDB" id="P96468"/>
<dbReference type="Proteomes" id="UP000002512">
    <property type="component" value="Chromosome"/>
</dbReference>
<dbReference type="GO" id="GO:0030695">
    <property type="term" value="F:GTPase regulator activity"/>
    <property type="evidence" value="ECO:0000315"/>
    <property type="project" value="CACAO"/>
</dbReference>
<dbReference type="FunFam" id="1.10.10.10:FF:001296">
    <property type="entry name" value="UPF0122 protein A6J86_005860"/>
    <property type="match status" value="1"/>
</dbReference>
<dbReference type="Gene3D" id="1.10.10.10">
    <property type="entry name" value="Winged helix-like DNA-binding domain superfamily/Winged helix DNA-binding domain"/>
    <property type="match status" value="1"/>
</dbReference>
<dbReference type="HAMAP" id="MF_00245">
    <property type="entry name" value="UPF0122"/>
    <property type="match status" value="1"/>
</dbReference>
<dbReference type="InterPro" id="IPR013324">
    <property type="entry name" value="RNA_pol_sigma_r3/r4-like"/>
</dbReference>
<dbReference type="InterPro" id="IPR007394">
    <property type="entry name" value="UPF0122"/>
</dbReference>
<dbReference type="InterPro" id="IPR054831">
    <property type="entry name" value="UPF0122_fam_protein"/>
</dbReference>
<dbReference type="InterPro" id="IPR036388">
    <property type="entry name" value="WH-like_DNA-bd_sf"/>
</dbReference>
<dbReference type="NCBIfam" id="NF001066">
    <property type="entry name" value="PRK00118.1-1"/>
    <property type="match status" value="1"/>
</dbReference>
<dbReference type="NCBIfam" id="NF001068">
    <property type="entry name" value="PRK00118.1-4"/>
    <property type="match status" value="1"/>
</dbReference>
<dbReference type="NCBIfam" id="NF001070">
    <property type="entry name" value="PRK00118.1-6"/>
    <property type="match status" value="1"/>
</dbReference>
<dbReference type="NCBIfam" id="NF045758">
    <property type="entry name" value="YlxM"/>
    <property type="match status" value="1"/>
</dbReference>
<dbReference type="PANTHER" id="PTHR40083">
    <property type="entry name" value="UPF0122 PROTEIN CBO2450/CLC_2298"/>
    <property type="match status" value="1"/>
</dbReference>
<dbReference type="PANTHER" id="PTHR40083:SF1">
    <property type="entry name" value="UPF0122 PROTEIN YLXM"/>
    <property type="match status" value="1"/>
</dbReference>
<dbReference type="Pfam" id="PF04297">
    <property type="entry name" value="UPF0122"/>
    <property type="match status" value="1"/>
</dbReference>
<dbReference type="SUPFAM" id="SSF88659">
    <property type="entry name" value="Sigma3 and sigma4 domains of RNA polymerase sigma factors"/>
    <property type="match status" value="1"/>
</dbReference>
<accession>P96468</accession>
<accession>Q54432</accession>
<reference key="1">
    <citation type="journal article" date="1996" name="J. Bacteriol.">
        <title>Insertional mutagenesis and recovery of interrupted genes of Streptococcus mutans by using transposon Tn917: preliminary characterization of mutants displaying acid sensitivity and nutritional requirements.</title>
        <authorList>
            <person name="Gutierrez J.A."/>
            <person name="Crowley P.J."/>
            <person name="Brown D.P."/>
            <person name="Hillman J.D."/>
            <person name="Youngman P."/>
            <person name="Bleiweis A.S."/>
        </authorList>
    </citation>
    <scope>NUCLEOTIDE SEQUENCE [GENOMIC DNA]</scope>
    <source>
        <strain>JH1005</strain>
    </source>
</reference>
<reference key="2">
    <citation type="submission" date="1997-02" db="EMBL/GenBank/DDBJ databases">
        <title>Ffh of Streptococcus mutans is involved in acidurance.</title>
        <authorList>
            <person name="Gutierrez J.A."/>
            <person name="Cvitkovitch D.G."/>
            <person name="Brady L.J."/>
            <person name="Hamilton I.R."/>
            <person name="Hillman J.D."/>
            <person name="Bleiweis A.S."/>
        </authorList>
    </citation>
    <scope>NUCLEOTIDE SEQUENCE [GENOMIC DNA]</scope>
    <source>
        <strain>JH1005</strain>
    </source>
</reference>
<reference key="3">
    <citation type="journal article" date="2002" name="Proc. Natl. Acad. Sci. U.S.A.">
        <title>Genome sequence of Streptococcus mutans UA159, a cariogenic dental pathogen.</title>
        <authorList>
            <person name="Ajdic D.J."/>
            <person name="McShan W.M."/>
            <person name="McLaughlin R.E."/>
            <person name="Savic G."/>
            <person name="Chang J."/>
            <person name="Carson M.B."/>
            <person name="Primeaux C."/>
            <person name="Tian R."/>
            <person name="Kenton S."/>
            <person name="Jia H.G."/>
            <person name="Lin S.P."/>
            <person name="Qian Y."/>
            <person name="Li S."/>
            <person name="Zhu H."/>
            <person name="Najar F.Z."/>
            <person name="Lai H."/>
            <person name="White J."/>
            <person name="Roe B.A."/>
            <person name="Ferretti J.J."/>
        </authorList>
    </citation>
    <scope>NUCLEOTIDE SEQUENCE [LARGE SCALE GENOMIC DNA]</scope>
    <source>
        <strain>ATCC 700610 / UA159</strain>
    </source>
</reference>
<keyword id="KW-1185">Reference proteome</keyword>
<proteinExistence type="inferred from homology"/>
<feature type="chain" id="PRO_0000211885" description="UPF0122 protein SMU_1061">
    <location>
        <begin position="1"/>
        <end position="110"/>
    </location>
</feature>
<feature type="sequence conflict" description="In Ref. 1; AAC44501." evidence="1" ref="1">
    <original>D</original>
    <variation>A</variation>
    <location>
        <position position="75"/>
    </location>
</feature>
<feature type="sequence conflict" description="In Ref. 1; AAC44501." evidence="1" ref="1">
    <original>T</original>
    <variation>S</variation>
    <location>
        <position position="104"/>
    </location>
</feature>
<gene>
    <name type="primary">ylxM</name>
    <name type="ordered locus">SMU_1061</name>
</gene>
<protein>
    <recommendedName>
        <fullName>UPF0122 protein SMU_1061</fullName>
    </recommendedName>
</protein>